<proteinExistence type="inferred from homology"/>
<dbReference type="EMBL" id="CP000800">
    <property type="protein sequence ID" value="ABV17298.1"/>
    <property type="molecule type" value="Genomic_DNA"/>
</dbReference>
<dbReference type="BMRB" id="A7ZMJ8"/>
<dbReference type="SMR" id="A7ZMJ8"/>
<dbReference type="KEGG" id="ecw:EcE24377A_1952"/>
<dbReference type="HOGENOM" id="CLU_167445_0_0_6"/>
<dbReference type="Proteomes" id="UP000001122">
    <property type="component" value="Chromosome"/>
</dbReference>
<dbReference type="GO" id="GO:0003677">
    <property type="term" value="F:DNA binding"/>
    <property type="evidence" value="ECO:0007669"/>
    <property type="project" value="UniProtKB-UniRule"/>
</dbReference>
<dbReference type="GO" id="GO:0051301">
    <property type="term" value="P:cell division"/>
    <property type="evidence" value="ECO:0007669"/>
    <property type="project" value="UniProtKB-UniRule"/>
</dbReference>
<dbReference type="FunFam" id="3.30.730.20:FF:000001">
    <property type="entry name" value="Cell division activator CedA"/>
    <property type="match status" value="1"/>
</dbReference>
<dbReference type="Gene3D" id="3.30.730.20">
    <property type="entry name" value="Cell division activator CedA"/>
    <property type="match status" value="1"/>
</dbReference>
<dbReference type="HAMAP" id="MF_01580">
    <property type="entry name" value="CedA"/>
    <property type="match status" value="1"/>
</dbReference>
<dbReference type="InterPro" id="IPR038463">
    <property type="entry name" value="CedA-like_sf"/>
</dbReference>
<dbReference type="InterPro" id="IPR019666">
    <property type="entry name" value="Cell_div_activator_CedA"/>
</dbReference>
<dbReference type="NCBIfam" id="NF007510">
    <property type="entry name" value="PRK10113.1"/>
    <property type="match status" value="1"/>
</dbReference>
<dbReference type="Pfam" id="PF10729">
    <property type="entry name" value="CedA"/>
    <property type="match status" value="1"/>
</dbReference>
<gene>
    <name evidence="1" type="primary">cedA</name>
    <name type="ordered locus">EcE24377A_1952</name>
</gene>
<comment type="function">
    <text evidence="1">Activates the cell division inhibited by chromosomal DNA over-replication.</text>
</comment>
<comment type="similarity">
    <text evidence="1">Belongs to the CedA family.</text>
</comment>
<name>CEDA_ECO24</name>
<organism>
    <name type="scientific">Escherichia coli O139:H28 (strain E24377A / ETEC)</name>
    <dbReference type="NCBI Taxonomy" id="331111"/>
    <lineage>
        <taxon>Bacteria</taxon>
        <taxon>Pseudomonadati</taxon>
        <taxon>Pseudomonadota</taxon>
        <taxon>Gammaproteobacteria</taxon>
        <taxon>Enterobacterales</taxon>
        <taxon>Enterobacteriaceae</taxon>
        <taxon>Escherichia</taxon>
    </lineage>
</organism>
<protein>
    <recommendedName>
        <fullName evidence="1">Cell division activator CedA</fullName>
    </recommendedName>
</protein>
<reference key="1">
    <citation type="journal article" date="2008" name="J. Bacteriol.">
        <title>The pangenome structure of Escherichia coli: comparative genomic analysis of E. coli commensal and pathogenic isolates.</title>
        <authorList>
            <person name="Rasko D.A."/>
            <person name="Rosovitz M.J."/>
            <person name="Myers G.S.A."/>
            <person name="Mongodin E.F."/>
            <person name="Fricke W.F."/>
            <person name="Gajer P."/>
            <person name="Crabtree J."/>
            <person name="Sebaihia M."/>
            <person name="Thomson N.R."/>
            <person name="Chaudhuri R."/>
            <person name="Henderson I.R."/>
            <person name="Sperandio V."/>
            <person name="Ravel J."/>
        </authorList>
    </citation>
    <scope>NUCLEOTIDE SEQUENCE [LARGE SCALE GENOMIC DNA]</scope>
    <source>
        <strain>E24377A / ETEC</strain>
    </source>
</reference>
<accession>A7ZMJ8</accession>
<sequence length="80" mass="9377">MKKPLRQQNRQIISYVPRTEPAPPEHAIKMDSFRDVWMLRGKYVAFVLMGESFLRSPAFTVPESAQRWANQIRQEGEVTE</sequence>
<evidence type="ECO:0000255" key="1">
    <source>
        <dbReference type="HAMAP-Rule" id="MF_01580"/>
    </source>
</evidence>
<keyword id="KW-0131">Cell cycle</keyword>
<keyword id="KW-0132">Cell division</keyword>
<keyword id="KW-0238">DNA-binding</keyword>
<keyword id="KW-1185">Reference proteome</keyword>
<feature type="chain" id="PRO_1000069275" description="Cell division activator CedA">
    <location>
        <begin position="1"/>
        <end position="80"/>
    </location>
</feature>